<dbReference type="EC" id="1.6.5.-" evidence="1"/>
<dbReference type="EC" id="1.7.1.17" evidence="1"/>
<dbReference type="EMBL" id="CP000076">
    <property type="protein sequence ID" value="AAY92380.1"/>
    <property type="molecule type" value="Genomic_DNA"/>
</dbReference>
<dbReference type="RefSeq" id="WP_011061397.1">
    <property type="nucleotide sequence ID" value="NC_004129.6"/>
</dbReference>
<dbReference type="SMR" id="Q4KC17"/>
<dbReference type="STRING" id="220664.PFL_3110"/>
<dbReference type="KEGG" id="pfl:PFL_3110"/>
<dbReference type="PATRIC" id="fig|220664.5.peg.3171"/>
<dbReference type="eggNOG" id="COG1182">
    <property type="taxonomic scope" value="Bacteria"/>
</dbReference>
<dbReference type="HOGENOM" id="CLU_088964_0_0_6"/>
<dbReference type="Proteomes" id="UP000008540">
    <property type="component" value="Chromosome"/>
</dbReference>
<dbReference type="GO" id="GO:0009055">
    <property type="term" value="F:electron transfer activity"/>
    <property type="evidence" value="ECO:0007669"/>
    <property type="project" value="UniProtKB-UniRule"/>
</dbReference>
<dbReference type="GO" id="GO:0010181">
    <property type="term" value="F:FMN binding"/>
    <property type="evidence" value="ECO:0007669"/>
    <property type="project" value="UniProtKB-UniRule"/>
</dbReference>
<dbReference type="GO" id="GO:0016652">
    <property type="term" value="F:oxidoreductase activity, acting on NAD(P)H as acceptor"/>
    <property type="evidence" value="ECO:0007669"/>
    <property type="project" value="UniProtKB-UniRule"/>
</dbReference>
<dbReference type="GO" id="GO:0016655">
    <property type="term" value="F:oxidoreductase activity, acting on NAD(P)H, quinone or similar compound as acceptor"/>
    <property type="evidence" value="ECO:0007669"/>
    <property type="project" value="InterPro"/>
</dbReference>
<dbReference type="Gene3D" id="3.40.50.360">
    <property type="match status" value="1"/>
</dbReference>
<dbReference type="HAMAP" id="MF_01216">
    <property type="entry name" value="Azoreductase_type1"/>
    <property type="match status" value="1"/>
</dbReference>
<dbReference type="InterPro" id="IPR003680">
    <property type="entry name" value="Flavodoxin_fold"/>
</dbReference>
<dbReference type="InterPro" id="IPR029039">
    <property type="entry name" value="Flavoprotein-like_sf"/>
</dbReference>
<dbReference type="InterPro" id="IPR050104">
    <property type="entry name" value="FMN-dep_NADH:Q_OxRdtase_AzoR1"/>
</dbReference>
<dbReference type="InterPro" id="IPR023048">
    <property type="entry name" value="NADH:quinone_OxRdtase_FMN_depd"/>
</dbReference>
<dbReference type="PANTHER" id="PTHR43741">
    <property type="entry name" value="FMN-DEPENDENT NADH-AZOREDUCTASE 1"/>
    <property type="match status" value="1"/>
</dbReference>
<dbReference type="PANTHER" id="PTHR43741:SF4">
    <property type="entry name" value="FMN-DEPENDENT NADH:QUINONE OXIDOREDUCTASE"/>
    <property type="match status" value="1"/>
</dbReference>
<dbReference type="Pfam" id="PF02525">
    <property type="entry name" value="Flavodoxin_2"/>
    <property type="match status" value="1"/>
</dbReference>
<dbReference type="SUPFAM" id="SSF52218">
    <property type="entry name" value="Flavoproteins"/>
    <property type="match status" value="1"/>
</dbReference>
<comment type="function">
    <text evidence="1">Quinone reductase that provides resistance to thiol-specific stress caused by electrophilic quinones.</text>
</comment>
<comment type="function">
    <text evidence="1">Also exhibits azoreductase activity. Catalyzes the reductive cleavage of the azo bond in aromatic azo compounds to the corresponding amines.</text>
</comment>
<comment type="catalytic activity">
    <reaction evidence="1">
        <text>2 a quinone + NADH + H(+) = 2 a 1,4-benzosemiquinone + NAD(+)</text>
        <dbReference type="Rhea" id="RHEA:65952"/>
        <dbReference type="ChEBI" id="CHEBI:15378"/>
        <dbReference type="ChEBI" id="CHEBI:57540"/>
        <dbReference type="ChEBI" id="CHEBI:57945"/>
        <dbReference type="ChEBI" id="CHEBI:132124"/>
        <dbReference type="ChEBI" id="CHEBI:134225"/>
    </reaction>
</comment>
<comment type="catalytic activity">
    <reaction evidence="1">
        <text>N,N-dimethyl-1,4-phenylenediamine + anthranilate + 2 NAD(+) = 2-(4-dimethylaminophenyl)diazenylbenzoate + 2 NADH + 2 H(+)</text>
        <dbReference type="Rhea" id="RHEA:55872"/>
        <dbReference type="ChEBI" id="CHEBI:15378"/>
        <dbReference type="ChEBI" id="CHEBI:15783"/>
        <dbReference type="ChEBI" id="CHEBI:16567"/>
        <dbReference type="ChEBI" id="CHEBI:57540"/>
        <dbReference type="ChEBI" id="CHEBI:57945"/>
        <dbReference type="ChEBI" id="CHEBI:71579"/>
        <dbReference type="EC" id="1.7.1.17"/>
    </reaction>
</comment>
<comment type="cofactor">
    <cofactor evidence="1">
        <name>FMN</name>
        <dbReference type="ChEBI" id="CHEBI:58210"/>
    </cofactor>
    <text evidence="1">Binds 1 FMN per subunit.</text>
</comment>
<comment type="subunit">
    <text evidence="1">Homodimer.</text>
</comment>
<comment type="similarity">
    <text evidence="1">Belongs to the azoreductase type 1 family.</text>
</comment>
<gene>
    <name evidence="1" type="primary">azoR5</name>
    <name type="ordered locus">PFL_3110</name>
</gene>
<name>AZOR5_PSEF5</name>
<organism>
    <name type="scientific">Pseudomonas fluorescens (strain ATCC BAA-477 / NRRL B-23932 / Pf-5)</name>
    <dbReference type="NCBI Taxonomy" id="220664"/>
    <lineage>
        <taxon>Bacteria</taxon>
        <taxon>Pseudomonadati</taxon>
        <taxon>Pseudomonadota</taxon>
        <taxon>Gammaproteobacteria</taxon>
        <taxon>Pseudomonadales</taxon>
        <taxon>Pseudomonadaceae</taxon>
        <taxon>Pseudomonas</taxon>
    </lineage>
</organism>
<keyword id="KW-0285">Flavoprotein</keyword>
<keyword id="KW-0288">FMN</keyword>
<keyword id="KW-0520">NAD</keyword>
<keyword id="KW-0560">Oxidoreductase</keyword>
<accession>Q4KC17</accession>
<sequence>MKLLHIDSSILGDNSASRQLSHSVVEAWKAAHPATVVTYRDLANDAISHFSAATLVAAGTAAELRDAAQKHEAQLSAQALAEFKAADTVVVAAPMYNFTIPTQLKAWIDRIAVAGETFRYTEAGPQGLCGGKKVIVVSTSGGLHVGQATGVAHEDYLKVLFGFFGITDVEFVRAHGLAYGEEVRSKAMSDAQAQISQQLFAAA</sequence>
<proteinExistence type="inferred from homology"/>
<evidence type="ECO:0000255" key="1">
    <source>
        <dbReference type="HAMAP-Rule" id="MF_01216"/>
    </source>
</evidence>
<reference key="1">
    <citation type="journal article" date="2005" name="Nat. Biotechnol.">
        <title>Complete genome sequence of the plant commensal Pseudomonas fluorescens Pf-5.</title>
        <authorList>
            <person name="Paulsen I.T."/>
            <person name="Press C.M."/>
            <person name="Ravel J."/>
            <person name="Kobayashi D.Y."/>
            <person name="Myers G.S.A."/>
            <person name="Mavrodi D.V."/>
            <person name="DeBoy R.T."/>
            <person name="Seshadri R."/>
            <person name="Ren Q."/>
            <person name="Madupu R."/>
            <person name="Dodson R.J."/>
            <person name="Durkin A.S."/>
            <person name="Brinkac L.M."/>
            <person name="Daugherty S.C."/>
            <person name="Sullivan S.A."/>
            <person name="Rosovitz M.J."/>
            <person name="Gwinn M.L."/>
            <person name="Zhou L."/>
            <person name="Schneider D.J."/>
            <person name="Cartinhour S.W."/>
            <person name="Nelson W.C."/>
            <person name="Weidman J."/>
            <person name="Watkins K."/>
            <person name="Tran K."/>
            <person name="Khouri H."/>
            <person name="Pierson E.A."/>
            <person name="Pierson L.S. III"/>
            <person name="Thomashow L.S."/>
            <person name="Loper J.E."/>
        </authorList>
    </citation>
    <scope>NUCLEOTIDE SEQUENCE [LARGE SCALE GENOMIC DNA]</scope>
    <source>
        <strain>ATCC BAA-477 / NRRL B-23932 / Pf-5</strain>
    </source>
</reference>
<protein>
    <recommendedName>
        <fullName evidence="1">FMN-dependent NADH:quinone oxidoreductase 5</fullName>
        <ecNumber evidence="1">1.6.5.-</ecNumber>
    </recommendedName>
    <alternativeName>
        <fullName evidence="1">Azo-dye reductase 5</fullName>
    </alternativeName>
    <alternativeName>
        <fullName evidence="1">FMN-dependent NADH-azo compound oxidoreductase 5</fullName>
    </alternativeName>
    <alternativeName>
        <fullName evidence="1">FMN-dependent NADH-azoreductase 5</fullName>
        <ecNumber evidence="1">1.7.1.17</ecNumber>
    </alternativeName>
</protein>
<feature type="chain" id="PRO_0000245948" description="FMN-dependent NADH:quinone oxidoreductase 5">
    <location>
        <begin position="1"/>
        <end position="203"/>
    </location>
</feature>
<feature type="binding site" evidence="1">
    <location>
        <position position="9"/>
    </location>
    <ligand>
        <name>FMN</name>
        <dbReference type="ChEBI" id="CHEBI:58210"/>
    </ligand>
</feature>
<feature type="binding site" evidence="1">
    <location>
        <begin position="15"/>
        <end position="17"/>
    </location>
    <ligand>
        <name>FMN</name>
        <dbReference type="ChEBI" id="CHEBI:58210"/>
    </ligand>
</feature>
<feature type="binding site" evidence="1">
    <location>
        <begin position="95"/>
        <end position="98"/>
    </location>
    <ligand>
        <name>FMN</name>
        <dbReference type="ChEBI" id="CHEBI:58210"/>
    </ligand>
</feature>
<feature type="binding site" evidence="1">
    <location>
        <begin position="139"/>
        <end position="142"/>
    </location>
    <ligand>
        <name>FMN</name>
        <dbReference type="ChEBI" id="CHEBI:58210"/>
    </ligand>
</feature>